<evidence type="ECO:0000255" key="1">
    <source>
        <dbReference type="HAMAP-Rule" id="MF_00185"/>
    </source>
</evidence>
<sequence length="306" mass="34995">MQKIIVLIGPTGIGKTDLALDLAPKINAEIISGDSMQIYQEVSIGTAKPTDEELKRVKHYLINQRSIFEEYSVKDFVAEGTKAVDKIVADGAIPLVVGGTGFYINALVNQLQLGEPGEYQTSVDPQWEEYLKENGENKLWDLLQAKDPAAAEKIAPQNSRRSLRALTVISRTGKLFSEQQQKINPRYDALILGLNSDREEVYQRINMRVDKMMEHGLLQEAKFVYENRSREHQVIQAIGYKEFFPYFSGEKTLDECVNKLKQASRKYAKRQLTYFKHQLPVVWLDPLQDEKVSEKALRKINEFLNK</sequence>
<reference key="1">
    <citation type="journal article" date="2004" name="Proc. Natl. Acad. Sci. U.S.A.">
        <title>The genome sequence of the probiotic intestinal bacterium Lactobacillus johnsonii NCC 533.</title>
        <authorList>
            <person name="Pridmore R.D."/>
            <person name="Berger B."/>
            <person name="Desiere F."/>
            <person name="Vilanova D."/>
            <person name="Barretto C."/>
            <person name="Pittet A.-C."/>
            <person name="Zwahlen M.-C."/>
            <person name="Rouvet M."/>
            <person name="Altermann E."/>
            <person name="Barrangou R."/>
            <person name="Mollet B."/>
            <person name="Mercenier A."/>
            <person name="Klaenhammer T."/>
            <person name="Arigoni F."/>
            <person name="Schell M.A."/>
        </authorList>
    </citation>
    <scope>NUCLEOTIDE SEQUENCE [LARGE SCALE GENOMIC DNA]</scope>
    <source>
        <strain>CNCM I-1225 / La1 / NCC 533</strain>
    </source>
</reference>
<feature type="chain" id="PRO_0000163928" description="tRNA dimethylallyltransferase">
    <location>
        <begin position="1"/>
        <end position="306"/>
    </location>
</feature>
<feature type="region of interest" description="Interaction with substrate tRNA" evidence="1">
    <location>
        <begin position="34"/>
        <end position="37"/>
    </location>
</feature>
<feature type="binding site" evidence="1">
    <location>
        <begin position="9"/>
        <end position="16"/>
    </location>
    <ligand>
        <name>ATP</name>
        <dbReference type="ChEBI" id="CHEBI:30616"/>
    </ligand>
</feature>
<feature type="binding site" evidence="1">
    <location>
        <begin position="11"/>
        <end position="16"/>
    </location>
    <ligand>
        <name>substrate</name>
    </ligand>
</feature>
<feature type="site" description="Interaction with substrate tRNA" evidence="1">
    <location>
        <position position="100"/>
    </location>
</feature>
<protein>
    <recommendedName>
        <fullName evidence="1">tRNA dimethylallyltransferase</fullName>
        <ecNumber evidence="1">2.5.1.75</ecNumber>
    </recommendedName>
    <alternativeName>
        <fullName evidence="1">Dimethylallyl diphosphate:tRNA dimethylallyltransferase</fullName>
        <shortName evidence="1">DMAPP:tRNA dimethylallyltransferase</shortName>
        <shortName evidence="1">DMATase</shortName>
    </alternativeName>
    <alternativeName>
        <fullName evidence="1">Isopentenyl-diphosphate:tRNA isopentenyltransferase</fullName>
        <shortName evidence="1">IPP transferase</shortName>
        <shortName evidence="1">IPPT</shortName>
        <shortName evidence="1">IPTase</shortName>
    </alternativeName>
</protein>
<proteinExistence type="inferred from homology"/>
<accession>Q74IF3</accession>
<comment type="function">
    <text evidence="1">Catalyzes the transfer of a dimethylallyl group onto the adenine at position 37 in tRNAs that read codons beginning with uridine, leading to the formation of N6-(dimethylallyl)adenosine (i(6)A).</text>
</comment>
<comment type="catalytic activity">
    <reaction evidence="1">
        <text>adenosine(37) in tRNA + dimethylallyl diphosphate = N(6)-dimethylallyladenosine(37) in tRNA + diphosphate</text>
        <dbReference type="Rhea" id="RHEA:26482"/>
        <dbReference type="Rhea" id="RHEA-COMP:10162"/>
        <dbReference type="Rhea" id="RHEA-COMP:10375"/>
        <dbReference type="ChEBI" id="CHEBI:33019"/>
        <dbReference type="ChEBI" id="CHEBI:57623"/>
        <dbReference type="ChEBI" id="CHEBI:74411"/>
        <dbReference type="ChEBI" id="CHEBI:74415"/>
        <dbReference type="EC" id="2.5.1.75"/>
    </reaction>
</comment>
<comment type="cofactor">
    <cofactor evidence="1">
        <name>Mg(2+)</name>
        <dbReference type="ChEBI" id="CHEBI:18420"/>
    </cofactor>
</comment>
<comment type="subunit">
    <text evidence="1">Monomer.</text>
</comment>
<comment type="similarity">
    <text evidence="1">Belongs to the IPP transferase family.</text>
</comment>
<organism>
    <name type="scientific">Lactobacillus johnsonii (strain CNCM I-12250 / La1 / NCC 533)</name>
    <dbReference type="NCBI Taxonomy" id="257314"/>
    <lineage>
        <taxon>Bacteria</taxon>
        <taxon>Bacillati</taxon>
        <taxon>Bacillota</taxon>
        <taxon>Bacilli</taxon>
        <taxon>Lactobacillales</taxon>
        <taxon>Lactobacillaceae</taxon>
        <taxon>Lactobacillus</taxon>
    </lineage>
</organism>
<dbReference type="EC" id="2.5.1.75" evidence="1"/>
<dbReference type="EMBL" id="AE017198">
    <property type="protein sequence ID" value="AAS09385.1"/>
    <property type="molecule type" value="Genomic_DNA"/>
</dbReference>
<dbReference type="RefSeq" id="WP_011162314.1">
    <property type="nucleotide sequence ID" value="NC_005362.1"/>
</dbReference>
<dbReference type="SMR" id="Q74IF3"/>
<dbReference type="GeneID" id="83570810"/>
<dbReference type="KEGG" id="ljo:LJ_1615"/>
<dbReference type="PATRIC" id="fig|257314.6.peg.1437"/>
<dbReference type="eggNOG" id="COG0324">
    <property type="taxonomic scope" value="Bacteria"/>
</dbReference>
<dbReference type="HOGENOM" id="CLU_032616_0_1_9"/>
<dbReference type="Proteomes" id="UP000000581">
    <property type="component" value="Chromosome"/>
</dbReference>
<dbReference type="GO" id="GO:0005524">
    <property type="term" value="F:ATP binding"/>
    <property type="evidence" value="ECO:0007669"/>
    <property type="project" value="UniProtKB-UniRule"/>
</dbReference>
<dbReference type="GO" id="GO:0052381">
    <property type="term" value="F:tRNA dimethylallyltransferase activity"/>
    <property type="evidence" value="ECO:0007669"/>
    <property type="project" value="UniProtKB-UniRule"/>
</dbReference>
<dbReference type="GO" id="GO:0006400">
    <property type="term" value="P:tRNA modification"/>
    <property type="evidence" value="ECO:0007669"/>
    <property type="project" value="TreeGrafter"/>
</dbReference>
<dbReference type="Gene3D" id="1.10.20.140">
    <property type="match status" value="1"/>
</dbReference>
<dbReference type="Gene3D" id="3.40.50.300">
    <property type="entry name" value="P-loop containing nucleotide triphosphate hydrolases"/>
    <property type="match status" value="1"/>
</dbReference>
<dbReference type="HAMAP" id="MF_00185">
    <property type="entry name" value="IPP_trans"/>
    <property type="match status" value="1"/>
</dbReference>
<dbReference type="InterPro" id="IPR039657">
    <property type="entry name" value="Dimethylallyltransferase"/>
</dbReference>
<dbReference type="InterPro" id="IPR008144">
    <property type="entry name" value="Guanylate_kin-like_dom"/>
</dbReference>
<dbReference type="InterPro" id="IPR018022">
    <property type="entry name" value="IPT"/>
</dbReference>
<dbReference type="InterPro" id="IPR027417">
    <property type="entry name" value="P-loop_NTPase"/>
</dbReference>
<dbReference type="NCBIfam" id="TIGR00174">
    <property type="entry name" value="miaA"/>
    <property type="match status" value="1"/>
</dbReference>
<dbReference type="PANTHER" id="PTHR11088">
    <property type="entry name" value="TRNA DIMETHYLALLYLTRANSFERASE"/>
    <property type="match status" value="1"/>
</dbReference>
<dbReference type="PANTHER" id="PTHR11088:SF60">
    <property type="entry name" value="TRNA DIMETHYLALLYLTRANSFERASE"/>
    <property type="match status" value="1"/>
</dbReference>
<dbReference type="Pfam" id="PF01715">
    <property type="entry name" value="IPPT"/>
    <property type="match status" value="1"/>
</dbReference>
<dbReference type="SUPFAM" id="SSF52540">
    <property type="entry name" value="P-loop containing nucleoside triphosphate hydrolases"/>
    <property type="match status" value="2"/>
</dbReference>
<keyword id="KW-0067">ATP-binding</keyword>
<keyword id="KW-0460">Magnesium</keyword>
<keyword id="KW-0547">Nucleotide-binding</keyword>
<keyword id="KW-0808">Transferase</keyword>
<keyword id="KW-0819">tRNA processing</keyword>
<name>MIAA_LACJO</name>
<gene>
    <name evidence="1" type="primary">miaA</name>
    <name type="ordered locus">LJ_1615</name>
</gene>